<accession>Q9PMR0</accession>
<accession>Q0P8L7</accession>
<comment type="function">
    <text evidence="1">Might be involved in Fe(2+) ion uptake (By similarity).</text>
</comment>
<comment type="induction">
    <text evidence="2">Detected in iron-restricted, mid-log-phase cells, part of the feoA-feoB operon (strain NCTC 11168).</text>
</comment>
<comment type="similarity">
    <text evidence="4">Belongs to the FeoA family.</text>
</comment>
<name>FEOA_CAMJE</name>
<gene>
    <name evidence="3" type="primary">feoA</name>
    <name type="ordered locus">Cj1397</name>
</gene>
<keyword id="KW-0406">Ion transport</keyword>
<keyword id="KW-0408">Iron</keyword>
<keyword id="KW-0410">Iron transport</keyword>
<keyword id="KW-1185">Reference proteome</keyword>
<keyword id="KW-0813">Transport</keyword>
<dbReference type="EMBL" id="AL111168">
    <property type="protein sequence ID" value="CAL35506.1"/>
    <property type="molecule type" value="Genomic_DNA"/>
</dbReference>
<dbReference type="PIR" id="E81284">
    <property type="entry name" value="E81284"/>
</dbReference>
<dbReference type="RefSeq" id="WP_002779147.1">
    <property type="nucleotide sequence ID" value="NZ_SZUC01000003.1"/>
</dbReference>
<dbReference type="RefSeq" id="YP_002344780.1">
    <property type="nucleotide sequence ID" value="NC_002163.1"/>
</dbReference>
<dbReference type="SMR" id="Q9PMR0"/>
<dbReference type="IntAct" id="Q9PMR0">
    <property type="interactions" value="4"/>
</dbReference>
<dbReference type="STRING" id="192222.Cj1397"/>
<dbReference type="PaxDb" id="192222-Cj1397"/>
<dbReference type="EnsemblBacteria" id="CAL35506">
    <property type="protein sequence ID" value="CAL35506"/>
    <property type="gene ID" value="Cj1397"/>
</dbReference>
<dbReference type="GeneID" id="905686"/>
<dbReference type="KEGG" id="cje:Cj1397"/>
<dbReference type="PATRIC" id="fig|192222.6.peg.1378"/>
<dbReference type="eggNOG" id="COG1918">
    <property type="taxonomic scope" value="Bacteria"/>
</dbReference>
<dbReference type="HOGENOM" id="CLU_150646_12_2_7"/>
<dbReference type="OrthoDB" id="5340000at2"/>
<dbReference type="PRO" id="PR:Q9PMR0"/>
<dbReference type="Proteomes" id="UP000000799">
    <property type="component" value="Chromosome"/>
</dbReference>
<dbReference type="GO" id="GO:0046914">
    <property type="term" value="F:transition metal ion binding"/>
    <property type="evidence" value="ECO:0007669"/>
    <property type="project" value="InterPro"/>
</dbReference>
<dbReference type="GO" id="GO:0006826">
    <property type="term" value="P:iron ion transport"/>
    <property type="evidence" value="ECO:0007669"/>
    <property type="project" value="UniProtKB-KW"/>
</dbReference>
<dbReference type="Gene3D" id="2.30.30.90">
    <property type="match status" value="1"/>
</dbReference>
<dbReference type="InterPro" id="IPR007167">
    <property type="entry name" value="Fe-transptr_FeoA-like"/>
</dbReference>
<dbReference type="InterPro" id="IPR038157">
    <property type="entry name" value="FeoA_core_dom"/>
</dbReference>
<dbReference type="InterPro" id="IPR008988">
    <property type="entry name" value="Transcriptional_repressor_C"/>
</dbReference>
<dbReference type="Pfam" id="PF04023">
    <property type="entry name" value="FeoA"/>
    <property type="match status" value="1"/>
</dbReference>
<dbReference type="SMART" id="SM00899">
    <property type="entry name" value="FeoA"/>
    <property type="match status" value="1"/>
</dbReference>
<dbReference type="SUPFAM" id="SSF50037">
    <property type="entry name" value="C-terminal domain of transcriptional repressors"/>
    <property type="match status" value="1"/>
</dbReference>
<protein>
    <recommendedName>
        <fullName evidence="3">Putative Fe(2+) transport protein A</fullName>
    </recommendedName>
</protein>
<reference key="1">
    <citation type="journal article" date="2000" name="Nature">
        <title>The genome sequence of the food-borne pathogen Campylobacter jejuni reveals hypervariable sequences.</title>
        <authorList>
            <person name="Parkhill J."/>
            <person name="Wren B.W."/>
            <person name="Mungall K.L."/>
            <person name="Ketley J.M."/>
            <person name="Churcher C.M."/>
            <person name="Basham D."/>
            <person name="Chillingworth T."/>
            <person name="Davies R.M."/>
            <person name="Feltwell T."/>
            <person name="Holroyd S."/>
            <person name="Jagels K."/>
            <person name="Karlyshev A.V."/>
            <person name="Moule S."/>
            <person name="Pallen M.J."/>
            <person name="Penn C.W."/>
            <person name="Quail M.A."/>
            <person name="Rajandream M.A."/>
            <person name="Rutherford K.M."/>
            <person name="van Vliet A.H.M."/>
            <person name="Whitehead S."/>
            <person name="Barrell B.G."/>
        </authorList>
    </citation>
    <scope>NUCLEOTIDE SEQUENCE [LARGE SCALE GENOMIC DNA]</scope>
    <source>
        <strain>ATCC 700819 / NCTC 11168</strain>
    </source>
</reference>
<reference key="2">
    <citation type="journal article" date="2006" name="Infect. Immun.">
        <title>Major role for FeoB in Campylobacter jejuni ferrous iron acquisition, gut colonization, and intracellular survival.</title>
        <authorList>
            <person name="Naikare H."/>
            <person name="Palyada K."/>
            <person name="Panciera R."/>
            <person name="Marlow D."/>
            <person name="Stintzi A."/>
        </authorList>
    </citation>
    <scope>INDUCTION</scope>
    <scope>OPERON</scope>
    <source>
        <strain>ATCC 700819 / NCTC 11168</strain>
    </source>
</reference>
<feature type="chain" id="PRO_0000128693" description="Putative Fe(2+) transport protein A">
    <location>
        <begin position="1"/>
        <end position="74"/>
    </location>
</feature>
<evidence type="ECO:0000250" key="1">
    <source>
        <dbReference type="UniProtKB" id="P0AEL3"/>
    </source>
</evidence>
<evidence type="ECO:0000269" key="2">
    <source>
    </source>
</evidence>
<evidence type="ECO:0000303" key="3">
    <source>
    </source>
</evidence>
<evidence type="ECO:0000305" key="4"/>
<proteinExistence type="evidence at transcript level"/>
<sequence>MTLNELKDGQKAIIVNLNAHKELKNRLLSFGFIKNKNLKKIHSSLKNATIMVELDTSCVILRSDEAKTIEVNLI</sequence>
<organism>
    <name type="scientific">Campylobacter jejuni subsp. jejuni serotype O:2 (strain ATCC 700819 / NCTC 11168)</name>
    <dbReference type="NCBI Taxonomy" id="192222"/>
    <lineage>
        <taxon>Bacteria</taxon>
        <taxon>Pseudomonadati</taxon>
        <taxon>Campylobacterota</taxon>
        <taxon>Epsilonproteobacteria</taxon>
        <taxon>Campylobacterales</taxon>
        <taxon>Campylobacteraceae</taxon>
        <taxon>Campylobacter</taxon>
    </lineage>
</organism>